<keyword id="KW-0997">Cell inner membrane</keyword>
<keyword id="KW-1003">Cell membrane</keyword>
<keyword id="KW-0407">Ion channel</keyword>
<keyword id="KW-0406">Ion transport</keyword>
<keyword id="KW-0472">Membrane</keyword>
<keyword id="KW-0812">Transmembrane</keyword>
<keyword id="KW-1133">Transmembrane helix</keyword>
<keyword id="KW-0813">Transport</keyword>
<sequence>MSFIKEFREFAMRGNVVDLAVGVIIGAAFGKIVSSLVADIIMPPLGLLIGGIDFKQFAFTLREAQGDIPAVVMHYGVFIQNVFDFVIVAFAIFVAIKLINRLNRKKAEEPAAPPAPSKEEVLLGEIRDLLKEQNNRS</sequence>
<dbReference type="EMBL" id="AM933173">
    <property type="protein sequence ID" value="CAR39799.1"/>
    <property type="molecule type" value="Genomic_DNA"/>
</dbReference>
<dbReference type="RefSeq" id="WP_000008119.1">
    <property type="nucleotide sequence ID" value="NC_011274.1"/>
</dbReference>
<dbReference type="SMR" id="B5RH45"/>
<dbReference type="KEGG" id="seg:SG4028"/>
<dbReference type="HOGENOM" id="CLU_095787_0_0_6"/>
<dbReference type="Proteomes" id="UP000008321">
    <property type="component" value="Chromosome"/>
</dbReference>
<dbReference type="GO" id="GO:0005886">
    <property type="term" value="C:plasma membrane"/>
    <property type="evidence" value="ECO:0007669"/>
    <property type="project" value="UniProtKB-SubCell"/>
</dbReference>
<dbReference type="GO" id="GO:0008381">
    <property type="term" value="F:mechanosensitive monoatomic ion channel activity"/>
    <property type="evidence" value="ECO:0007669"/>
    <property type="project" value="UniProtKB-UniRule"/>
</dbReference>
<dbReference type="FunFam" id="1.10.1200.120:FF:000001">
    <property type="entry name" value="Large-conductance mechanosensitive channel"/>
    <property type="match status" value="1"/>
</dbReference>
<dbReference type="Gene3D" id="1.10.1200.120">
    <property type="entry name" value="Large-conductance mechanosensitive channel, MscL, domain 1"/>
    <property type="match status" value="1"/>
</dbReference>
<dbReference type="HAMAP" id="MF_00115">
    <property type="entry name" value="MscL"/>
    <property type="match status" value="1"/>
</dbReference>
<dbReference type="InterPro" id="IPR019823">
    <property type="entry name" value="Mechanosensitive_channel_CS"/>
</dbReference>
<dbReference type="InterPro" id="IPR001185">
    <property type="entry name" value="MS_channel"/>
</dbReference>
<dbReference type="InterPro" id="IPR037673">
    <property type="entry name" value="MSC/AndL"/>
</dbReference>
<dbReference type="InterPro" id="IPR036019">
    <property type="entry name" value="MscL_channel"/>
</dbReference>
<dbReference type="NCBIfam" id="TIGR00220">
    <property type="entry name" value="mscL"/>
    <property type="match status" value="1"/>
</dbReference>
<dbReference type="NCBIfam" id="NF001841">
    <property type="entry name" value="PRK00567.1-1"/>
    <property type="match status" value="1"/>
</dbReference>
<dbReference type="NCBIfam" id="NF001843">
    <property type="entry name" value="PRK00567.1-4"/>
    <property type="match status" value="1"/>
</dbReference>
<dbReference type="PANTHER" id="PTHR30266:SF2">
    <property type="entry name" value="LARGE-CONDUCTANCE MECHANOSENSITIVE CHANNEL"/>
    <property type="match status" value="1"/>
</dbReference>
<dbReference type="PANTHER" id="PTHR30266">
    <property type="entry name" value="MECHANOSENSITIVE CHANNEL MSCL"/>
    <property type="match status" value="1"/>
</dbReference>
<dbReference type="Pfam" id="PF01741">
    <property type="entry name" value="MscL"/>
    <property type="match status" value="1"/>
</dbReference>
<dbReference type="PRINTS" id="PR01264">
    <property type="entry name" value="MECHCHANNEL"/>
</dbReference>
<dbReference type="SUPFAM" id="SSF81330">
    <property type="entry name" value="Gated mechanosensitive channel"/>
    <property type="match status" value="1"/>
</dbReference>
<dbReference type="PROSITE" id="PS01327">
    <property type="entry name" value="MSCL"/>
    <property type="match status" value="1"/>
</dbReference>
<gene>
    <name evidence="1" type="primary">mscL</name>
    <name type="ordered locus">SG4028</name>
</gene>
<accession>B5RH45</accession>
<proteinExistence type="inferred from homology"/>
<name>MSCL_SALG2</name>
<organism>
    <name type="scientific">Salmonella gallinarum (strain 287/91 / NCTC 13346)</name>
    <dbReference type="NCBI Taxonomy" id="550538"/>
    <lineage>
        <taxon>Bacteria</taxon>
        <taxon>Pseudomonadati</taxon>
        <taxon>Pseudomonadota</taxon>
        <taxon>Gammaproteobacteria</taxon>
        <taxon>Enterobacterales</taxon>
        <taxon>Enterobacteriaceae</taxon>
        <taxon>Salmonella</taxon>
    </lineage>
</organism>
<protein>
    <recommendedName>
        <fullName evidence="1">Large-conductance mechanosensitive channel</fullName>
    </recommendedName>
</protein>
<comment type="function">
    <text evidence="1">Channel that opens in response to stretch forces in the membrane lipid bilayer. May participate in the regulation of osmotic pressure changes within the cell.</text>
</comment>
<comment type="subunit">
    <text evidence="1">Homopentamer.</text>
</comment>
<comment type="subcellular location">
    <subcellularLocation>
        <location evidence="1">Cell inner membrane</location>
        <topology evidence="1">Multi-pass membrane protein</topology>
    </subcellularLocation>
</comment>
<comment type="similarity">
    <text evidence="1">Belongs to the MscL family.</text>
</comment>
<reference key="1">
    <citation type="journal article" date="2008" name="Genome Res.">
        <title>Comparative genome analysis of Salmonella enteritidis PT4 and Salmonella gallinarum 287/91 provides insights into evolutionary and host adaptation pathways.</title>
        <authorList>
            <person name="Thomson N.R."/>
            <person name="Clayton D.J."/>
            <person name="Windhorst D."/>
            <person name="Vernikos G."/>
            <person name="Davidson S."/>
            <person name="Churcher C."/>
            <person name="Quail M.A."/>
            <person name="Stevens M."/>
            <person name="Jones M.A."/>
            <person name="Watson M."/>
            <person name="Barron A."/>
            <person name="Layton A."/>
            <person name="Pickard D."/>
            <person name="Kingsley R.A."/>
            <person name="Bignell A."/>
            <person name="Clark L."/>
            <person name="Harris B."/>
            <person name="Ormond D."/>
            <person name="Abdellah Z."/>
            <person name="Brooks K."/>
            <person name="Cherevach I."/>
            <person name="Chillingworth T."/>
            <person name="Woodward J."/>
            <person name="Norberczak H."/>
            <person name="Lord A."/>
            <person name="Arrowsmith C."/>
            <person name="Jagels K."/>
            <person name="Moule S."/>
            <person name="Mungall K."/>
            <person name="Saunders M."/>
            <person name="Whitehead S."/>
            <person name="Chabalgoity J.A."/>
            <person name="Maskell D."/>
            <person name="Humphreys T."/>
            <person name="Roberts M."/>
            <person name="Barrow P.A."/>
            <person name="Dougan G."/>
            <person name="Parkhill J."/>
        </authorList>
    </citation>
    <scope>NUCLEOTIDE SEQUENCE [LARGE SCALE GENOMIC DNA]</scope>
    <source>
        <strain>287/91 / NCTC 13346</strain>
    </source>
</reference>
<feature type="chain" id="PRO_1000094922" description="Large-conductance mechanosensitive channel">
    <location>
        <begin position="1"/>
        <end position="137"/>
    </location>
</feature>
<feature type="transmembrane region" description="Helical" evidence="1">
    <location>
        <begin position="10"/>
        <end position="30"/>
    </location>
</feature>
<feature type="transmembrane region" description="Helical" evidence="1">
    <location>
        <begin position="76"/>
        <end position="96"/>
    </location>
</feature>
<evidence type="ECO:0000255" key="1">
    <source>
        <dbReference type="HAMAP-Rule" id="MF_00115"/>
    </source>
</evidence>